<gene>
    <name type="primary">UL21</name>
</gene>
<feature type="chain" id="PRO_0000115972" description="Tegument protein UL21">
    <location>
        <begin position="1"/>
        <end position="535"/>
    </location>
</feature>
<feature type="region of interest" description="Disordered" evidence="2">
    <location>
        <begin position="251"/>
        <end position="279"/>
    </location>
</feature>
<keyword id="KW-1035">Host cytoplasm</keyword>
<keyword id="KW-1048">Host nucleus</keyword>
<keyword id="KW-0946">Virion</keyword>
<keyword id="KW-0920">Virion tegument</keyword>
<reference key="1">
    <citation type="journal article" date="1986" name="Virology">
        <title>The properties and sequence of glycoprotein H of herpes simplex virus type 1.</title>
        <authorList>
            <person name="Gompels U."/>
            <person name="Minson A."/>
        </authorList>
    </citation>
    <scope>NUCLEOTIDE SEQUENCE [GENOMIC DNA]</scope>
</reference>
<organism>
    <name type="scientific">Human herpesvirus 1 (strain HFEM)</name>
    <name type="common">HHV-1</name>
    <name type="synonym">Human herpes simplex virus 1</name>
    <dbReference type="NCBI Taxonomy" id="10303"/>
    <lineage>
        <taxon>Viruses</taxon>
        <taxon>Duplodnaviria</taxon>
        <taxon>Heunggongvirae</taxon>
        <taxon>Peploviricota</taxon>
        <taxon>Herviviricetes</taxon>
        <taxon>Herpesvirales</taxon>
        <taxon>Orthoherpesviridae</taxon>
        <taxon>Alphaherpesvirinae</taxon>
        <taxon>Simplexvirus</taxon>
        <taxon>Simplexvirus humanalpha1</taxon>
        <taxon>Human herpesvirus 1</taxon>
    </lineage>
</organism>
<sequence>MELSYTTTMHYRDVVFYVTTDRNRAYFVCGGCVYSVGRPYASQPGEIAKFGLVVRGTGPDDRVVANYVRSELRQRGLQDVRPIGEDEVFLDSVCLLNPNVSSELDVINTNDVEVLDECLAEYCTSLRTSPGVLISGLRVRAQDRIIELFEHPTIVNVSSHFVYTPSPYVFALAQAHLPRLPSSLEALVSGLFDGIPAPRQPLDAHNPRTDVVITGRRAPRPIAGSGAGSGGAGAKRATVSEFVQVKHIDRVGPAGVSPAPPPNNTDSSSLVPGAQDSAPPGPTLRELWWVFYAADRALEEPRADSGLTREEVRAVRGFREQAWKLFGSAGAPRAFIGAALGLSPLQKLAVYYYIIHRERRLSPFPALVRLVGRYTQRHGLYVPRPDDPVLADAINGLFRDALAAGTTAEQLLMFDLLPPKDVPVGSDVQADSTALLRFIESQRLAVPGGVISPEHVAYLGAFLSVLYAGRGRMSAATHTARLTGVTSLVLAVGDVDRLSAFDRGAAGAASRTRAAGYLDVLLTVRLARSQHGQSV</sequence>
<evidence type="ECO:0000250" key="1"/>
<evidence type="ECO:0000256" key="2">
    <source>
        <dbReference type="SAM" id="MobiDB-lite"/>
    </source>
</evidence>
<evidence type="ECO:0000305" key="3"/>
<comment type="function">
    <text evidence="1">May participate in DNA packaging/capsid maturation events. Promotes efficient incorporation of tegument proteins UL46, UL49, and US3 into virions. May also play a role in capsid transport to the trans-Golgi network (TGN) (By similarity).</text>
</comment>
<comment type="subunit">
    <text evidence="1">Interacts (via C-terminus) with UL16.</text>
</comment>
<comment type="subcellular location">
    <subcellularLocation>
        <location evidence="1">Virion tegument</location>
    </subcellularLocation>
    <subcellularLocation>
        <location evidence="1">Host cytoplasm</location>
    </subcellularLocation>
    <subcellularLocation>
        <location evidence="1">Host nucleus</location>
    </subcellularLocation>
</comment>
<comment type="similarity">
    <text evidence="3">Belongs to the alphaherpesvirinae UL21 protein family.</text>
</comment>
<comment type="sequence caution" evidence="3">
    <conflict type="erroneous initiation">
        <sequence resource="EMBL-CDS" id="AAA45816"/>
    </conflict>
</comment>
<name>TEG4_HHV1E</name>
<proteinExistence type="inferred from homology"/>
<organismHost>
    <name type="scientific">Homo sapiens</name>
    <name type="common">Human</name>
    <dbReference type="NCBI Taxonomy" id="9606"/>
</organismHost>
<protein>
    <recommendedName>
        <fullName>Tegument protein UL21</fullName>
    </recommendedName>
</protein>
<dbReference type="EMBL" id="M14884">
    <property type="protein sequence ID" value="AAA45816.1"/>
    <property type="status" value="ALT_INIT"/>
    <property type="molecule type" value="Genomic_DNA"/>
</dbReference>
<dbReference type="PIR" id="C24187">
    <property type="entry name" value="C24187"/>
</dbReference>
<dbReference type="SMR" id="P09855"/>
<dbReference type="GO" id="GO:0030430">
    <property type="term" value="C:host cell cytoplasm"/>
    <property type="evidence" value="ECO:0007669"/>
    <property type="project" value="UniProtKB-SubCell"/>
</dbReference>
<dbReference type="GO" id="GO:0042025">
    <property type="term" value="C:host cell nucleus"/>
    <property type="evidence" value="ECO:0007669"/>
    <property type="project" value="UniProtKB-SubCell"/>
</dbReference>
<dbReference type="GO" id="GO:0019033">
    <property type="term" value="C:viral tegument"/>
    <property type="evidence" value="ECO:0007669"/>
    <property type="project" value="UniProtKB-SubCell"/>
</dbReference>
<dbReference type="InterPro" id="IPR004936">
    <property type="entry name" value="Herpes_UL21"/>
</dbReference>
<dbReference type="Pfam" id="PF03252">
    <property type="entry name" value="Herpes_UL21"/>
    <property type="match status" value="1"/>
</dbReference>
<accession>P09855</accession>